<accession>Q56127</accession>
<reference key="1">
    <citation type="journal article" date="1996" name="J. Bacteriol.">
        <title>Characterization of the rcsA and rcsB genes from Salmonella typhi: rcsB through tviA is involved in regulation of Vi antigen synthesis.</title>
        <authorList>
            <person name="Virlogeux I."/>
            <person name="Waxin H."/>
            <person name="Ecobichon C."/>
            <person name="Lee J.O."/>
            <person name="Popoff M.Y."/>
        </authorList>
    </citation>
    <scope>NUCLEOTIDE SEQUENCE [GENOMIC DNA]</scope>
    <source>
        <strain>ATCC 700931 / Ty2</strain>
    </source>
</reference>
<reference key="2">
    <citation type="submission" date="1997-02" db="EMBL/GenBank/DDBJ databases">
        <authorList>
            <person name="Hashimoto Y."/>
        </authorList>
    </citation>
    <scope>NUCLEOTIDE SEQUENCE [GENOMIC DNA]</scope>
    <source>
        <strain>GIFU 10007</strain>
    </source>
</reference>
<reference key="3">
    <citation type="journal article" date="2001" name="Nature">
        <title>Complete genome sequence of a multiple drug resistant Salmonella enterica serovar Typhi CT18.</title>
        <authorList>
            <person name="Parkhill J."/>
            <person name="Dougan G."/>
            <person name="James K.D."/>
            <person name="Thomson N.R."/>
            <person name="Pickard D."/>
            <person name="Wain J."/>
            <person name="Churcher C.M."/>
            <person name="Mungall K.L."/>
            <person name="Bentley S.D."/>
            <person name="Holden M.T.G."/>
            <person name="Sebaihia M."/>
            <person name="Baker S."/>
            <person name="Basham D."/>
            <person name="Brooks K."/>
            <person name="Chillingworth T."/>
            <person name="Connerton P."/>
            <person name="Cronin A."/>
            <person name="Davis P."/>
            <person name="Davies R.M."/>
            <person name="Dowd L."/>
            <person name="White N."/>
            <person name="Farrar J."/>
            <person name="Feltwell T."/>
            <person name="Hamlin N."/>
            <person name="Haque A."/>
            <person name="Hien T.T."/>
            <person name="Holroyd S."/>
            <person name="Jagels K."/>
            <person name="Krogh A."/>
            <person name="Larsen T.S."/>
            <person name="Leather S."/>
            <person name="Moule S."/>
            <person name="O'Gaora P."/>
            <person name="Parry C."/>
            <person name="Quail M.A."/>
            <person name="Rutherford K.M."/>
            <person name="Simmonds M."/>
            <person name="Skelton J."/>
            <person name="Stevens K."/>
            <person name="Whitehead S."/>
            <person name="Barrell B.G."/>
        </authorList>
    </citation>
    <scope>NUCLEOTIDE SEQUENCE [LARGE SCALE GENOMIC DNA]</scope>
    <source>
        <strain>CT18</strain>
    </source>
</reference>
<reference key="4">
    <citation type="journal article" date="2003" name="J. Bacteriol.">
        <title>Comparative genomics of Salmonella enterica serovar Typhi strains Ty2 and CT18.</title>
        <authorList>
            <person name="Deng W."/>
            <person name="Liou S.-R."/>
            <person name="Plunkett G. III"/>
            <person name="Mayhew G.F."/>
            <person name="Rose D.J."/>
            <person name="Burland V."/>
            <person name="Kodoyianni V."/>
            <person name="Schwartz D.C."/>
            <person name="Blattner F.R."/>
        </authorList>
    </citation>
    <scope>NUCLEOTIDE SEQUENCE [LARGE SCALE GENOMIC DNA]</scope>
    <source>
        <strain>ATCC 700931 / Ty2</strain>
    </source>
</reference>
<name>RCSB_SALTI</name>
<gene>
    <name evidence="1" type="primary">rcsB</name>
    <name type="ordered locus">STY2495</name>
    <name type="ordered locus">t0595</name>
</gene>
<feature type="chain" id="PRO_0000081212" description="Transcriptional regulatory protein RcsB">
    <location>
        <begin position="1"/>
        <end position="216"/>
    </location>
</feature>
<feature type="domain" description="Response regulatory" evidence="2">
    <location>
        <begin position="5"/>
        <end position="124"/>
    </location>
</feature>
<feature type="domain" description="HTH luxR-type" evidence="1">
    <location>
        <begin position="144"/>
        <end position="209"/>
    </location>
</feature>
<feature type="DNA-binding region" description="H-T-H motif" evidence="1">
    <location>
        <begin position="168"/>
        <end position="187"/>
    </location>
</feature>
<feature type="modified residue" description="4-aspartylphosphate" evidence="1">
    <location>
        <position position="56"/>
    </location>
</feature>
<keyword id="KW-0238">DNA-binding</keyword>
<keyword id="KW-0597">Phosphoprotein</keyword>
<keyword id="KW-0804">Transcription</keyword>
<keyword id="KW-0805">Transcription regulation</keyword>
<keyword id="KW-0902">Two-component regulatory system</keyword>
<dbReference type="EMBL" id="X87830">
    <property type="protein sequence ID" value="CAA61094.1"/>
    <property type="molecule type" value="Genomic_DNA"/>
</dbReference>
<dbReference type="EMBL" id="AB000683">
    <property type="protein sequence ID" value="BAA19163.1"/>
    <property type="molecule type" value="Genomic_DNA"/>
</dbReference>
<dbReference type="EMBL" id="AL513382">
    <property type="protein sequence ID" value="CAD07501.1"/>
    <property type="molecule type" value="Genomic_DNA"/>
</dbReference>
<dbReference type="EMBL" id="AE014613">
    <property type="protein sequence ID" value="AAO68300.1"/>
    <property type="molecule type" value="Genomic_DNA"/>
</dbReference>
<dbReference type="RefSeq" id="NP_456814.1">
    <property type="nucleotide sequence ID" value="NC_003198.1"/>
</dbReference>
<dbReference type="RefSeq" id="WP_001061910.1">
    <property type="nucleotide sequence ID" value="NZ_WSUR01000051.1"/>
</dbReference>
<dbReference type="SMR" id="Q56127"/>
<dbReference type="STRING" id="220341.gene:17586398"/>
<dbReference type="KEGG" id="stt:t0595"/>
<dbReference type="KEGG" id="sty:STY2495"/>
<dbReference type="PATRIC" id="fig|220341.7.peg.2527"/>
<dbReference type="eggNOG" id="COG2197">
    <property type="taxonomic scope" value="Bacteria"/>
</dbReference>
<dbReference type="HOGENOM" id="CLU_000445_90_1_6"/>
<dbReference type="OMA" id="IEWVNIV"/>
<dbReference type="OrthoDB" id="4313922at2"/>
<dbReference type="Proteomes" id="UP000000541">
    <property type="component" value="Chromosome"/>
</dbReference>
<dbReference type="Proteomes" id="UP000002670">
    <property type="component" value="Chromosome"/>
</dbReference>
<dbReference type="GO" id="GO:0003677">
    <property type="term" value="F:DNA binding"/>
    <property type="evidence" value="ECO:0007669"/>
    <property type="project" value="UniProtKB-UniRule"/>
</dbReference>
<dbReference type="GO" id="GO:0000160">
    <property type="term" value="P:phosphorelay signal transduction system"/>
    <property type="evidence" value="ECO:0007669"/>
    <property type="project" value="UniProtKB-UniRule"/>
</dbReference>
<dbReference type="GO" id="GO:0006355">
    <property type="term" value="P:regulation of DNA-templated transcription"/>
    <property type="evidence" value="ECO:0007669"/>
    <property type="project" value="UniProtKB-UniRule"/>
</dbReference>
<dbReference type="CDD" id="cd06170">
    <property type="entry name" value="LuxR_C_like"/>
    <property type="match status" value="1"/>
</dbReference>
<dbReference type="CDD" id="cd17535">
    <property type="entry name" value="REC_NarL-like"/>
    <property type="match status" value="1"/>
</dbReference>
<dbReference type="FunFam" id="1.10.10.10:FF:000072">
    <property type="entry name" value="Transcriptional regulatory protein RcsB"/>
    <property type="match status" value="1"/>
</dbReference>
<dbReference type="FunFam" id="3.40.50.2300:FF:000023">
    <property type="entry name" value="Transcriptional regulatory protein RcsB"/>
    <property type="match status" value="1"/>
</dbReference>
<dbReference type="Gene3D" id="3.40.50.2300">
    <property type="match status" value="1"/>
</dbReference>
<dbReference type="Gene3D" id="1.10.10.10">
    <property type="entry name" value="Winged helix-like DNA-binding domain superfamily/Winged helix DNA-binding domain"/>
    <property type="match status" value="1"/>
</dbReference>
<dbReference type="HAMAP" id="MF_00981">
    <property type="entry name" value="RcsB"/>
    <property type="match status" value="1"/>
</dbReference>
<dbReference type="InterPro" id="IPR011006">
    <property type="entry name" value="CheY-like_superfamily"/>
</dbReference>
<dbReference type="InterPro" id="IPR030864">
    <property type="entry name" value="RcsB"/>
</dbReference>
<dbReference type="InterPro" id="IPR016032">
    <property type="entry name" value="Sig_transdc_resp-reg_C-effctor"/>
</dbReference>
<dbReference type="InterPro" id="IPR001789">
    <property type="entry name" value="Sig_transdc_resp-reg_receiver"/>
</dbReference>
<dbReference type="InterPro" id="IPR000792">
    <property type="entry name" value="Tscrpt_reg_LuxR_C"/>
</dbReference>
<dbReference type="InterPro" id="IPR039420">
    <property type="entry name" value="WalR-like"/>
</dbReference>
<dbReference type="InterPro" id="IPR036388">
    <property type="entry name" value="WH-like_DNA-bd_sf"/>
</dbReference>
<dbReference type="NCBIfam" id="NF008098">
    <property type="entry name" value="PRK10840.1"/>
    <property type="match status" value="1"/>
</dbReference>
<dbReference type="PANTHER" id="PTHR43214:SF17">
    <property type="entry name" value="TRANSCRIPTIONAL REGULATORY PROTEIN RCSB"/>
    <property type="match status" value="1"/>
</dbReference>
<dbReference type="PANTHER" id="PTHR43214">
    <property type="entry name" value="TWO-COMPONENT RESPONSE REGULATOR"/>
    <property type="match status" value="1"/>
</dbReference>
<dbReference type="Pfam" id="PF00196">
    <property type="entry name" value="GerE"/>
    <property type="match status" value="1"/>
</dbReference>
<dbReference type="Pfam" id="PF00072">
    <property type="entry name" value="Response_reg"/>
    <property type="match status" value="1"/>
</dbReference>
<dbReference type="PRINTS" id="PR00038">
    <property type="entry name" value="HTHLUXR"/>
</dbReference>
<dbReference type="SMART" id="SM00421">
    <property type="entry name" value="HTH_LUXR"/>
    <property type="match status" value="1"/>
</dbReference>
<dbReference type="SMART" id="SM00448">
    <property type="entry name" value="REC"/>
    <property type="match status" value="1"/>
</dbReference>
<dbReference type="SUPFAM" id="SSF46894">
    <property type="entry name" value="C-terminal effector domain of the bipartite response regulators"/>
    <property type="match status" value="1"/>
</dbReference>
<dbReference type="SUPFAM" id="SSF52172">
    <property type="entry name" value="CheY-like"/>
    <property type="match status" value="1"/>
</dbReference>
<dbReference type="PROSITE" id="PS00622">
    <property type="entry name" value="HTH_LUXR_1"/>
    <property type="match status" value="1"/>
</dbReference>
<dbReference type="PROSITE" id="PS50043">
    <property type="entry name" value="HTH_LUXR_2"/>
    <property type="match status" value="1"/>
</dbReference>
<dbReference type="PROSITE" id="PS50110">
    <property type="entry name" value="RESPONSE_REGULATORY"/>
    <property type="match status" value="1"/>
</dbReference>
<sequence>MNNMNIIIADDHPIVLFGIRKSLEQIEWVNVVGEFEDSTALINNLPKLDAHVLITDLSMPGDKYGDGITLIKYIKRHFPSLSIIVLTMNNNPAILSAVLDLDIEGIVLKQGAPTDLPKALAALQKGKKFTPESVSRLLEKISAGGYGDKRLSPKESEVLRLFAEGFLVTEIAKKLNRSIKTISSQKKSAMMKLGVENDIALLNYLSSVTLSPTDKE</sequence>
<protein>
    <recommendedName>
        <fullName evidence="1">Transcriptional regulatory protein RcsB</fullName>
    </recommendedName>
</protein>
<proteinExistence type="inferred from homology"/>
<organism>
    <name type="scientific">Salmonella typhi</name>
    <dbReference type="NCBI Taxonomy" id="90370"/>
    <lineage>
        <taxon>Bacteria</taxon>
        <taxon>Pseudomonadati</taxon>
        <taxon>Pseudomonadota</taxon>
        <taxon>Gammaproteobacteria</taxon>
        <taxon>Enterobacterales</taxon>
        <taxon>Enterobacteriaceae</taxon>
        <taxon>Salmonella</taxon>
    </lineage>
</organism>
<evidence type="ECO:0000255" key="1">
    <source>
        <dbReference type="HAMAP-Rule" id="MF_00981"/>
    </source>
</evidence>
<evidence type="ECO:0000255" key="2">
    <source>
        <dbReference type="PROSITE-ProRule" id="PRU00169"/>
    </source>
</evidence>
<comment type="function">
    <text evidence="1">Component of the Rcs signaling system, which controls transcription of numerous genes. RcsB is the response regulator that binds to regulatory DNA regions. Can function both in an RcsA-dependent or RcsA-independent manner.</text>
</comment>
<comment type="subunit">
    <text evidence="1">Interacts with RcsD and RcsA.</text>
</comment>
<comment type="PTM">
    <text evidence="1">Phosphorylated and activated by RcsD.</text>
</comment>
<comment type="similarity">
    <text evidence="1">Belongs to the RcsB family.</text>
</comment>